<evidence type="ECO:0000250" key="1"/>
<evidence type="ECO:0000255" key="2"/>
<evidence type="ECO:0000256" key="3">
    <source>
        <dbReference type="SAM" id="MobiDB-lite"/>
    </source>
</evidence>
<evidence type="ECO:0000305" key="4"/>
<organism>
    <name type="scientific">Arthroderma otae (strain ATCC MYA-4605 / CBS 113480)</name>
    <name type="common">Microsporum canis</name>
    <dbReference type="NCBI Taxonomy" id="554155"/>
    <lineage>
        <taxon>Eukaryota</taxon>
        <taxon>Fungi</taxon>
        <taxon>Dikarya</taxon>
        <taxon>Ascomycota</taxon>
        <taxon>Pezizomycotina</taxon>
        <taxon>Eurotiomycetes</taxon>
        <taxon>Eurotiomycetidae</taxon>
        <taxon>Onygenales</taxon>
        <taxon>Arthrodermataceae</taxon>
        <taxon>Microsporum</taxon>
    </lineage>
</organism>
<comment type="function">
    <text evidence="1">Assembly factor required for Rieske Fe-S protein RIP1 incorporation into the cytochrome b-c1 (CIII) complex. Functions as a chaperone, binding to this subunit within the mitochondrial matrix and stabilizing it prior to its translocation and insertion into the late CIII dimeric intermediate within the mitochondrial inner membrane. Modulates the mitochondrial matrix zinc pool (By similarity).</text>
</comment>
<comment type="subunit">
    <text evidence="1">Interacts with RIP1.</text>
</comment>
<comment type="subcellular location">
    <subcellularLocation>
        <location evidence="1">Mitochondrion matrix</location>
    </subcellularLocation>
</comment>
<comment type="similarity">
    <text evidence="4">Belongs to the complex I LYR family. MZM1 subfamily.</text>
</comment>
<name>MZM1_ARTOC</name>
<dbReference type="EMBL" id="DS995702">
    <property type="protein sequence ID" value="EEQ29925.1"/>
    <property type="molecule type" value="Genomic_DNA"/>
</dbReference>
<dbReference type="RefSeq" id="XP_002849810.1">
    <property type="nucleotide sequence ID" value="XM_002849764.1"/>
</dbReference>
<dbReference type="SMR" id="C5FGP0"/>
<dbReference type="STRING" id="554155.C5FGP0"/>
<dbReference type="GeneID" id="9223022"/>
<dbReference type="VEuPathDB" id="FungiDB:MCYG_02744"/>
<dbReference type="eggNOG" id="ENOG502S6EF">
    <property type="taxonomic scope" value="Eukaryota"/>
</dbReference>
<dbReference type="HOGENOM" id="CLU_147114_2_0_1"/>
<dbReference type="OMA" id="KYKLRIH"/>
<dbReference type="OrthoDB" id="529194at2759"/>
<dbReference type="Proteomes" id="UP000002035">
    <property type="component" value="Unassembled WGS sequence"/>
</dbReference>
<dbReference type="GO" id="GO:0005759">
    <property type="term" value="C:mitochondrial matrix"/>
    <property type="evidence" value="ECO:0007669"/>
    <property type="project" value="UniProtKB-SubCell"/>
</dbReference>
<dbReference type="GO" id="GO:0044183">
    <property type="term" value="F:protein folding chaperone"/>
    <property type="evidence" value="ECO:0007669"/>
    <property type="project" value="TreeGrafter"/>
</dbReference>
<dbReference type="GO" id="GO:0034551">
    <property type="term" value="P:mitochondrial respiratory chain complex III assembly"/>
    <property type="evidence" value="ECO:0007669"/>
    <property type="project" value="InterPro"/>
</dbReference>
<dbReference type="CDD" id="cd20267">
    <property type="entry name" value="Complex1_LYR_LYRM7"/>
    <property type="match status" value="1"/>
</dbReference>
<dbReference type="InterPro" id="IPR045298">
    <property type="entry name" value="Complex1_LYR_LYRM7"/>
</dbReference>
<dbReference type="InterPro" id="IPR050435">
    <property type="entry name" value="MZM1/LYRM7"/>
</dbReference>
<dbReference type="PANTHER" id="PTHR46749">
    <property type="entry name" value="COMPLEX III ASSEMBLY FACTOR LYRM7"/>
    <property type="match status" value="1"/>
</dbReference>
<dbReference type="PANTHER" id="PTHR46749:SF1">
    <property type="entry name" value="COMPLEX III ASSEMBLY FACTOR LYRM7"/>
    <property type="match status" value="1"/>
</dbReference>
<keyword id="KW-0143">Chaperone</keyword>
<keyword id="KW-0496">Mitochondrion</keyword>
<keyword id="KW-1185">Reference proteome</keyword>
<keyword id="KW-0809">Transit peptide</keyword>
<protein>
    <recommendedName>
        <fullName>Mitochondrial zinc maintenance protein 1, mitochondrial</fullName>
    </recommendedName>
</protein>
<proteinExistence type="inferred from homology"/>
<sequence length="123" mass="13504">MAAATNPVSAISAYRQLLRATRIAFNGDFPVLHAARAEARKQFDQSRQPGVDTPMKIQHALETAHILRSNIVQGTKIETKEEGGEQVDRYALRIHEYTERGDNDTIKAAGQKPVKVGKGCCSS</sequence>
<reference key="1">
    <citation type="journal article" date="2012" name="MBio">
        <title>Comparative genome analysis of Trichophyton rubrum and related dermatophytes reveals candidate genes involved in infection.</title>
        <authorList>
            <person name="Martinez D.A."/>
            <person name="Oliver B.G."/>
            <person name="Graeser Y."/>
            <person name="Goldberg J.M."/>
            <person name="Li W."/>
            <person name="Martinez-Rossi N.M."/>
            <person name="Monod M."/>
            <person name="Shelest E."/>
            <person name="Barton R.C."/>
            <person name="Birch E."/>
            <person name="Brakhage A.A."/>
            <person name="Chen Z."/>
            <person name="Gurr S.J."/>
            <person name="Heiman D."/>
            <person name="Heitman J."/>
            <person name="Kosti I."/>
            <person name="Rossi A."/>
            <person name="Saif S."/>
            <person name="Samalova M."/>
            <person name="Saunders C.W."/>
            <person name="Shea T."/>
            <person name="Summerbell R.C."/>
            <person name="Xu J."/>
            <person name="Young S."/>
            <person name="Zeng Q."/>
            <person name="Birren B.W."/>
            <person name="Cuomo C.A."/>
            <person name="White T.C."/>
        </authorList>
    </citation>
    <scope>NUCLEOTIDE SEQUENCE [LARGE SCALE GENOMIC DNA]</scope>
    <source>
        <strain>ATCC MYA-4605 / CBS 113480</strain>
    </source>
</reference>
<accession>C5FGP0</accession>
<gene>
    <name type="primary">MZM1</name>
    <name type="ORF">MCYG_02744</name>
</gene>
<feature type="transit peptide" description="Mitochondrion" evidence="2">
    <location>
        <begin position="1"/>
        <end status="unknown"/>
    </location>
</feature>
<feature type="chain" id="PRO_0000405498" description="Mitochondrial zinc maintenance protein 1, mitochondrial">
    <location>
        <begin status="unknown"/>
        <end position="123"/>
    </location>
</feature>
<feature type="region of interest" description="Disordered" evidence="3">
    <location>
        <begin position="104"/>
        <end position="123"/>
    </location>
</feature>